<proteinExistence type="inferred from homology"/>
<name>RS3_STREM</name>
<evidence type="ECO:0000255" key="1">
    <source>
        <dbReference type="HAMAP-Rule" id="MF_01309"/>
    </source>
</evidence>
<evidence type="ECO:0000305" key="2"/>
<reference key="1">
    <citation type="journal article" date="2008" name="PLoS ONE">
        <title>Genome sequence of a lancefield group C Streptococcus zooepidemicus strain causing epidemic nephritis: new information about an old disease.</title>
        <authorList>
            <person name="Beres S.B."/>
            <person name="Sesso R."/>
            <person name="Pinto S.W.L."/>
            <person name="Hoe N.P."/>
            <person name="Porcella S.F."/>
            <person name="Deleo F.R."/>
            <person name="Musser J.M."/>
        </authorList>
    </citation>
    <scope>NUCLEOTIDE SEQUENCE [LARGE SCALE GENOMIC DNA]</scope>
    <source>
        <strain>MGCS10565</strain>
    </source>
</reference>
<accession>B4U506</accession>
<organism>
    <name type="scientific">Streptococcus equi subsp. zooepidemicus (strain MGCS10565)</name>
    <dbReference type="NCBI Taxonomy" id="552526"/>
    <lineage>
        <taxon>Bacteria</taxon>
        <taxon>Bacillati</taxon>
        <taxon>Bacillota</taxon>
        <taxon>Bacilli</taxon>
        <taxon>Lactobacillales</taxon>
        <taxon>Streptococcaceae</taxon>
        <taxon>Streptococcus</taxon>
    </lineage>
</organism>
<feature type="chain" id="PRO_1000141019" description="Small ribosomal subunit protein uS3">
    <location>
        <begin position="1"/>
        <end position="217"/>
    </location>
</feature>
<feature type="domain" description="KH type-2" evidence="1">
    <location>
        <begin position="38"/>
        <end position="106"/>
    </location>
</feature>
<protein>
    <recommendedName>
        <fullName evidence="1">Small ribosomal subunit protein uS3</fullName>
    </recommendedName>
    <alternativeName>
        <fullName evidence="2">30S ribosomal protein S3</fullName>
    </alternativeName>
</protein>
<gene>
    <name evidence="1" type="primary">rpsC</name>
    <name type="ordered locus">Sez_0062</name>
</gene>
<comment type="function">
    <text evidence="1">Binds the lower part of the 30S subunit head. Binds mRNA in the 70S ribosome, positioning it for translation.</text>
</comment>
<comment type="subunit">
    <text evidence="1">Part of the 30S ribosomal subunit. Forms a tight complex with proteins S10 and S14.</text>
</comment>
<comment type="similarity">
    <text evidence="1">Belongs to the universal ribosomal protein uS3 family.</text>
</comment>
<sequence length="217" mass="24178">MGQKVHPIGMRVGIIRDWDAKWYAEKEYADYLHEDLAIRKFINKELAEASVSTIEIERAVNKVIVSLHTAKPGMVIGKGGANVDALRAQLNKLTGKQVHINIIEIKQPDLDAHLVGENIARQLEQRVAFRRAQKQAIQRTMRAGAKGIKTQVSGRLNGADIARSEGYSEGTVPLHTLRADIDYAWEEADTTYGKLGVKVWIYRGEVLPARKNTKGGK</sequence>
<dbReference type="EMBL" id="CP001129">
    <property type="protein sequence ID" value="ACG61445.1"/>
    <property type="molecule type" value="Genomic_DNA"/>
</dbReference>
<dbReference type="RefSeq" id="WP_012514737.1">
    <property type="nucleotide sequence ID" value="NC_011134.1"/>
</dbReference>
<dbReference type="SMR" id="B4U506"/>
<dbReference type="GeneID" id="83703910"/>
<dbReference type="KEGG" id="sez:Sez_0062"/>
<dbReference type="HOGENOM" id="CLU_058591_0_2_9"/>
<dbReference type="Proteomes" id="UP000001873">
    <property type="component" value="Chromosome"/>
</dbReference>
<dbReference type="GO" id="GO:0022627">
    <property type="term" value="C:cytosolic small ribosomal subunit"/>
    <property type="evidence" value="ECO:0007669"/>
    <property type="project" value="TreeGrafter"/>
</dbReference>
<dbReference type="GO" id="GO:0003729">
    <property type="term" value="F:mRNA binding"/>
    <property type="evidence" value="ECO:0007669"/>
    <property type="project" value="UniProtKB-UniRule"/>
</dbReference>
<dbReference type="GO" id="GO:0019843">
    <property type="term" value="F:rRNA binding"/>
    <property type="evidence" value="ECO:0007669"/>
    <property type="project" value="UniProtKB-UniRule"/>
</dbReference>
<dbReference type="GO" id="GO:0003735">
    <property type="term" value="F:structural constituent of ribosome"/>
    <property type="evidence" value="ECO:0007669"/>
    <property type="project" value="InterPro"/>
</dbReference>
<dbReference type="GO" id="GO:0006412">
    <property type="term" value="P:translation"/>
    <property type="evidence" value="ECO:0007669"/>
    <property type="project" value="UniProtKB-UniRule"/>
</dbReference>
<dbReference type="CDD" id="cd02412">
    <property type="entry name" value="KH-II_30S_S3"/>
    <property type="match status" value="1"/>
</dbReference>
<dbReference type="FunFam" id="3.30.1140.32:FF:000001">
    <property type="entry name" value="30S ribosomal protein S3"/>
    <property type="match status" value="1"/>
</dbReference>
<dbReference type="FunFam" id="3.30.300.20:FF:000001">
    <property type="entry name" value="30S ribosomal protein S3"/>
    <property type="match status" value="1"/>
</dbReference>
<dbReference type="Gene3D" id="3.30.300.20">
    <property type="match status" value="1"/>
</dbReference>
<dbReference type="Gene3D" id="3.30.1140.32">
    <property type="entry name" value="Ribosomal protein S3, C-terminal domain"/>
    <property type="match status" value="1"/>
</dbReference>
<dbReference type="HAMAP" id="MF_01309_B">
    <property type="entry name" value="Ribosomal_uS3_B"/>
    <property type="match status" value="1"/>
</dbReference>
<dbReference type="InterPro" id="IPR004087">
    <property type="entry name" value="KH_dom"/>
</dbReference>
<dbReference type="InterPro" id="IPR015946">
    <property type="entry name" value="KH_dom-like_a/b"/>
</dbReference>
<dbReference type="InterPro" id="IPR004044">
    <property type="entry name" value="KH_dom_type_2"/>
</dbReference>
<dbReference type="InterPro" id="IPR009019">
    <property type="entry name" value="KH_sf_prok-type"/>
</dbReference>
<dbReference type="InterPro" id="IPR036419">
    <property type="entry name" value="Ribosomal_S3_C_sf"/>
</dbReference>
<dbReference type="InterPro" id="IPR005704">
    <property type="entry name" value="Ribosomal_uS3_bac-typ"/>
</dbReference>
<dbReference type="InterPro" id="IPR001351">
    <property type="entry name" value="Ribosomal_uS3_C"/>
</dbReference>
<dbReference type="InterPro" id="IPR018280">
    <property type="entry name" value="Ribosomal_uS3_CS"/>
</dbReference>
<dbReference type="NCBIfam" id="TIGR01009">
    <property type="entry name" value="rpsC_bact"/>
    <property type="match status" value="1"/>
</dbReference>
<dbReference type="PANTHER" id="PTHR11760">
    <property type="entry name" value="30S/40S RIBOSOMAL PROTEIN S3"/>
    <property type="match status" value="1"/>
</dbReference>
<dbReference type="PANTHER" id="PTHR11760:SF19">
    <property type="entry name" value="SMALL RIBOSOMAL SUBUNIT PROTEIN US3C"/>
    <property type="match status" value="1"/>
</dbReference>
<dbReference type="Pfam" id="PF07650">
    <property type="entry name" value="KH_2"/>
    <property type="match status" value="1"/>
</dbReference>
<dbReference type="Pfam" id="PF00189">
    <property type="entry name" value="Ribosomal_S3_C"/>
    <property type="match status" value="1"/>
</dbReference>
<dbReference type="SMART" id="SM00322">
    <property type="entry name" value="KH"/>
    <property type="match status" value="1"/>
</dbReference>
<dbReference type="SUPFAM" id="SSF54814">
    <property type="entry name" value="Prokaryotic type KH domain (KH-domain type II)"/>
    <property type="match status" value="1"/>
</dbReference>
<dbReference type="SUPFAM" id="SSF54821">
    <property type="entry name" value="Ribosomal protein S3 C-terminal domain"/>
    <property type="match status" value="1"/>
</dbReference>
<dbReference type="PROSITE" id="PS50823">
    <property type="entry name" value="KH_TYPE_2"/>
    <property type="match status" value="1"/>
</dbReference>
<dbReference type="PROSITE" id="PS00548">
    <property type="entry name" value="RIBOSOMAL_S3"/>
    <property type="match status" value="1"/>
</dbReference>
<keyword id="KW-0687">Ribonucleoprotein</keyword>
<keyword id="KW-0689">Ribosomal protein</keyword>
<keyword id="KW-0694">RNA-binding</keyword>
<keyword id="KW-0699">rRNA-binding</keyword>